<reference key="1">
    <citation type="journal article" date="1997" name="Nature">
        <title>The nucleotide sequence of Saccharomyces cerevisiae chromosome XV.</title>
        <authorList>
            <person name="Dujon B."/>
            <person name="Albermann K."/>
            <person name="Aldea M."/>
            <person name="Alexandraki D."/>
            <person name="Ansorge W."/>
            <person name="Arino J."/>
            <person name="Benes V."/>
            <person name="Bohn C."/>
            <person name="Bolotin-Fukuhara M."/>
            <person name="Bordonne R."/>
            <person name="Boyer J."/>
            <person name="Camasses A."/>
            <person name="Casamayor A."/>
            <person name="Casas C."/>
            <person name="Cheret G."/>
            <person name="Cziepluch C."/>
            <person name="Daignan-Fornier B."/>
            <person name="Dang V.-D."/>
            <person name="de Haan M."/>
            <person name="Delius H."/>
            <person name="Durand P."/>
            <person name="Fairhead C."/>
            <person name="Feldmann H."/>
            <person name="Gaillon L."/>
            <person name="Galisson F."/>
            <person name="Gamo F.-J."/>
            <person name="Gancedo C."/>
            <person name="Goffeau A."/>
            <person name="Goulding S.E."/>
            <person name="Grivell L.A."/>
            <person name="Habbig B."/>
            <person name="Hand N.J."/>
            <person name="Hani J."/>
            <person name="Hattenhorst U."/>
            <person name="Hebling U."/>
            <person name="Hernando Y."/>
            <person name="Herrero E."/>
            <person name="Heumann K."/>
            <person name="Hiesel R."/>
            <person name="Hilger F."/>
            <person name="Hofmann B."/>
            <person name="Hollenberg C.P."/>
            <person name="Hughes B."/>
            <person name="Jauniaux J.-C."/>
            <person name="Kalogeropoulos A."/>
            <person name="Katsoulou C."/>
            <person name="Kordes E."/>
            <person name="Lafuente M.J."/>
            <person name="Landt O."/>
            <person name="Louis E.J."/>
            <person name="Maarse A.C."/>
            <person name="Madania A."/>
            <person name="Mannhaupt G."/>
            <person name="Marck C."/>
            <person name="Martin R.P."/>
            <person name="Mewes H.-W."/>
            <person name="Michaux G."/>
            <person name="Paces V."/>
            <person name="Parle-McDermott A.G."/>
            <person name="Pearson B.M."/>
            <person name="Perrin A."/>
            <person name="Pettersson B."/>
            <person name="Poch O."/>
            <person name="Pohl T.M."/>
            <person name="Poirey R."/>
            <person name="Portetelle D."/>
            <person name="Pujol A."/>
            <person name="Purnelle B."/>
            <person name="Ramezani Rad M."/>
            <person name="Rechmann S."/>
            <person name="Schwager C."/>
            <person name="Schweizer M."/>
            <person name="Sor F."/>
            <person name="Sterky F."/>
            <person name="Tarassov I.A."/>
            <person name="Teodoru C."/>
            <person name="Tettelin H."/>
            <person name="Thierry A."/>
            <person name="Tobiasch E."/>
            <person name="Tzermia M."/>
            <person name="Uhlen M."/>
            <person name="Unseld M."/>
            <person name="Valens M."/>
            <person name="Vandenbol M."/>
            <person name="Vetter I."/>
            <person name="Vlcek C."/>
            <person name="Voet M."/>
            <person name="Volckaert G."/>
            <person name="Voss H."/>
            <person name="Wambutt R."/>
            <person name="Wedler H."/>
            <person name="Wiemann S."/>
            <person name="Winsor B."/>
            <person name="Wolfe K.H."/>
            <person name="Zollner A."/>
            <person name="Zumstein E."/>
            <person name="Kleine K."/>
        </authorList>
    </citation>
    <scope>NUCLEOTIDE SEQUENCE [LARGE SCALE GENOMIC DNA]</scope>
    <source>
        <strain>ATCC 204508 / S288c</strain>
    </source>
</reference>
<reference key="2">
    <citation type="journal article" date="2014" name="G3 (Bethesda)">
        <title>The reference genome sequence of Saccharomyces cerevisiae: Then and now.</title>
        <authorList>
            <person name="Engel S.R."/>
            <person name="Dietrich F.S."/>
            <person name="Fisk D.G."/>
            <person name="Binkley G."/>
            <person name="Balakrishnan R."/>
            <person name="Costanzo M.C."/>
            <person name="Dwight S.S."/>
            <person name="Hitz B.C."/>
            <person name="Karra K."/>
            <person name="Nash R.S."/>
            <person name="Weng S."/>
            <person name="Wong E.D."/>
            <person name="Lloyd P."/>
            <person name="Skrzypek M.S."/>
            <person name="Miyasato S.R."/>
            <person name="Simison M."/>
            <person name="Cherry J.M."/>
        </authorList>
    </citation>
    <scope>GENOME REANNOTATION</scope>
    <source>
        <strain>ATCC 204508 / S288c</strain>
    </source>
</reference>
<reference key="3">
    <citation type="journal article" date="1999" name="Genetics">
        <title>Analysis of the seven-member AAD gene set demonstrates that genetic redundancy in yeast may be more apparent than real.</title>
        <authorList>
            <person name="Delneri D."/>
            <person name="Gardner D.C.J."/>
            <person name="Oliver S.G."/>
        </authorList>
    </citation>
    <scope>NOMENCLATURE</scope>
</reference>
<name>AAD15_YEAST</name>
<protein>
    <recommendedName>
        <fullName>Putative aryl-alcohol dehydrogenase AAD15</fullName>
        <ecNumber>1.1.1.-</ecNumber>
    </recommendedName>
</protein>
<keyword id="KW-0560">Oxidoreductase</keyword>
<keyword id="KW-1185">Reference proteome</keyword>
<sequence length="143" mass="15722">MARHFGMALAPWDVMGGGRFQSKKAMEERRKNGECIRSFVGASEQTDAEIKISEALAKVAEEHGTESVTAIAIAYVRSKAKNVFPSVEGGKIEDLKENIKALSIDLTPDNIKYLENVVPFDIGFPNTFIVLNSLTQKYGTNNV</sequence>
<proteinExistence type="inferred from homology"/>
<organism>
    <name type="scientific">Saccharomyces cerevisiae (strain ATCC 204508 / S288c)</name>
    <name type="common">Baker's yeast</name>
    <dbReference type="NCBI Taxonomy" id="559292"/>
    <lineage>
        <taxon>Eukaryota</taxon>
        <taxon>Fungi</taxon>
        <taxon>Dikarya</taxon>
        <taxon>Ascomycota</taxon>
        <taxon>Saccharomycotina</taxon>
        <taxon>Saccharomycetes</taxon>
        <taxon>Saccharomycetales</taxon>
        <taxon>Saccharomycetaceae</taxon>
        <taxon>Saccharomyces</taxon>
    </lineage>
</organism>
<accession>Q08361</accession>
<accession>D6W1Q4</accession>
<feature type="chain" id="PRO_0000070370" description="Putative aryl-alcohol dehydrogenase AAD15">
    <location>
        <begin position="1"/>
        <end position="143"/>
    </location>
</feature>
<comment type="function">
    <text evidence="1">Putative aryl-alcohol dehydrogenase.</text>
</comment>
<comment type="similarity">
    <text evidence="2">Belongs to the aldo/keto reductase family. Aldo/keto reductase 2 subfamily.</text>
</comment>
<comment type="caution">
    <text evidence="2">In contrast to other aldo/keto reductase 2 proteins, it lacks the N-terminal half which contains the active site. It is therefore unlikely that it acts as a functional oxydoreductase.</text>
</comment>
<evidence type="ECO:0000250" key="1"/>
<evidence type="ECO:0000305" key="2"/>
<dbReference type="EC" id="1.1.1.-"/>
<dbReference type="EMBL" id="Z74907">
    <property type="protein sequence ID" value="CAA99187.1"/>
    <property type="molecule type" value="Genomic_DNA"/>
</dbReference>
<dbReference type="EMBL" id="BK006948">
    <property type="protein sequence ID" value="DAA10620.1"/>
    <property type="molecule type" value="Genomic_DNA"/>
</dbReference>
<dbReference type="PIR" id="S66864">
    <property type="entry name" value="S66864"/>
</dbReference>
<dbReference type="RefSeq" id="NP_014477.1">
    <property type="nucleotide sequence ID" value="NM_001183418.1"/>
</dbReference>
<dbReference type="SMR" id="Q08361"/>
<dbReference type="BioGRID" id="34253">
    <property type="interactions" value="20"/>
</dbReference>
<dbReference type="FunCoup" id="Q08361">
    <property type="interactions" value="52"/>
</dbReference>
<dbReference type="IntAct" id="Q08361">
    <property type="interactions" value="1"/>
</dbReference>
<dbReference type="STRING" id="4932.YOL165C"/>
<dbReference type="PaxDb" id="4932-YOL165C"/>
<dbReference type="PeptideAtlas" id="Q08361"/>
<dbReference type="TopDownProteomics" id="Q08361"/>
<dbReference type="EnsemblFungi" id="YOL165C_mRNA">
    <property type="protein sequence ID" value="YOL165C"/>
    <property type="gene ID" value="YOL165C"/>
</dbReference>
<dbReference type="GeneID" id="853999"/>
<dbReference type="KEGG" id="sce:YOL165C"/>
<dbReference type="AGR" id="SGD:S000005525"/>
<dbReference type="SGD" id="S000005525">
    <property type="gene designation" value="AAD15"/>
</dbReference>
<dbReference type="VEuPathDB" id="FungiDB:YOL165C"/>
<dbReference type="eggNOG" id="KOG1575">
    <property type="taxonomic scope" value="Eukaryota"/>
</dbReference>
<dbReference type="GeneTree" id="ENSGT00940000176306"/>
<dbReference type="HOGENOM" id="CLU_138066_1_0_1"/>
<dbReference type="InParanoid" id="Q08361"/>
<dbReference type="OMA" id="FGMAQAP"/>
<dbReference type="OrthoDB" id="48988at2759"/>
<dbReference type="BioCyc" id="YEAST:YOL165C-MONOMER"/>
<dbReference type="BioGRID-ORCS" id="853999">
    <property type="hits" value="0 hits in 10 CRISPR screens"/>
</dbReference>
<dbReference type="PRO" id="PR:Q08361"/>
<dbReference type="Proteomes" id="UP000002311">
    <property type="component" value="Chromosome XV"/>
</dbReference>
<dbReference type="RNAct" id="Q08361">
    <property type="molecule type" value="protein"/>
</dbReference>
<dbReference type="GO" id="GO:0047681">
    <property type="term" value="F:aryl-alcohol dehydrogenase (NADP+) activity"/>
    <property type="evidence" value="ECO:0000250"/>
    <property type="project" value="SGD"/>
</dbReference>
<dbReference type="GO" id="GO:0006081">
    <property type="term" value="P:aldehyde metabolic process"/>
    <property type="evidence" value="ECO:0000250"/>
    <property type="project" value="SGD"/>
</dbReference>
<dbReference type="Gene3D" id="3.20.20.100">
    <property type="entry name" value="NADP-dependent oxidoreductase domain"/>
    <property type="match status" value="1"/>
</dbReference>
<dbReference type="InterPro" id="IPR050523">
    <property type="entry name" value="AKR_Detox_Biosynth"/>
</dbReference>
<dbReference type="InterPro" id="IPR023210">
    <property type="entry name" value="NADP_OxRdtase_dom"/>
</dbReference>
<dbReference type="InterPro" id="IPR036812">
    <property type="entry name" value="NADP_OxRdtase_dom_sf"/>
</dbReference>
<dbReference type="PANTHER" id="PTHR43364:SF2">
    <property type="entry name" value="ARYL-ALCOHOL DEHYDROGENASE AAD10-RELATED"/>
    <property type="match status" value="1"/>
</dbReference>
<dbReference type="PANTHER" id="PTHR43364">
    <property type="entry name" value="NADH-SPECIFIC METHYLGLYOXAL REDUCTASE-RELATED"/>
    <property type="match status" value="1"/>
</dbReference>
<dbReference type="Pfam" id="PF00248">
    <property type="entry name" value="Aldo_ket_red"/>
    <property type="match status" value="1"/>
</dbReference>
<dbReference type="SUPFAM" id="SSF51430">
    <property type="entry name" value="NAD(P)-linked oxidoreductase"/>
    <property type="match status" value="1"/>
</dbReference>
<gene>
    <name type="primary">AAD15</name>
    <name type="ordered locus">YOL165C</name>
</gene>